<evidence type="ECO:0000255" key="1">
    <source>
        <dbReference type="HAMAP-Rule" id="MF_01818"/>
    </source>
</evidence>
<protein>
    <recommendedName>
        <fullName evidence="1">Ribonuclease Z</fullName>
        <shortName evidence="1">RNase Z</shortName>
        <ecNumber evidence="1">3.1.26.11</ecNumber>
    </recommendedName>
    <alternativeName>
        <fullName evidence="1">tRNA 3 endonuclease</fullName>
    </alternativeName>
    <alternativeName>
        <fullName evidence="1">tRNase Z</fullName>
    </alternativeName>
</protein>
<proteinExistence type="inferred from homology"/>
<comment type="function">
    <text evidence="1">Zinc phosphodiesterase, which displays some tRNA 3'-processing endonuclease activity. Probably involved in tRNA maturation, by removing a 3'-trailer from precursor tRNA.</text>
</comment>
<comment type="catalytic activity">
    <reaction evidence="1">
        <text>Endonucleolytic cleavage of RNA, removing extra 3' nucleotides from tRNA precursor, generating 3' termini of tRNAs. A 3'-hydroxy group is left at the tRNA terminus and a 5'-phosphoryl group is left at the trailer molecule.</text>
        <dbReference type="EC" id="3.1.26.11"/>
    </reaction>
</comment>
<comment type="cofactor">
    <cofactor evidence="1">
        <name>Zn(2+)</name>
        <dbReference type="ChEBI" id="CHEBI:29105"/>
    </cofactor>
    <text evidence="1">Binds 2 Zn(2+) ions.</text>
</comment>
<comment type="subunit">
    <text evidence="1">Homodimer.</text>
</comment>
<comment type="similarity">
    <text evidence="1">Belongs to the RNase Z family.</text>
</comment>
<feature type="chain" id="PRO_1000070341" description="Ribonuclease Z">
    <location>
        <begin position="1"/>
        <end position="309"/>
    </location>
</feature>
<feature type="active site" description="Proton acceptor" evidence="1">
    <location>
        <position position="67"/>
    </location>
</feature>
<feature type="binding site" evidence="1">
    <location>
        <position position="63"/>
    </location>
    <ligand>
        <name>Zn(2+)</name>
        <dbReference type="ChEBI" id="CHEBI:29105"/>
        <label>1</label>
        <note>catalytic</note>
    </ligand>
</feature>
<feature type="binding site" evidence="1">
    <location>
        <position position="65"/>
    </location>
    <ligand>
        <name>Zn(2+)</name>
        <dbReference type="ChEBI" id="CHEBI:29105"/>
        <label>1</label>
        <note>catalytic</note>
    </ligand>
</feature>
<feature type="binding site" evidence="1">
    <location>
        <position position="67"/>
    </location>
    <ligand>
        <name>Zn(2+)</name>
        <dbReference type="ChEBI" id="CHEBI:29105"/>
        <label>2</label>
        <note>catalytic</note>
    </ligand>
</feature>
<feature type="binding site" evidence="1">
    <location>
        <position position="68"/>
    </location>
    <ligand>
        <name>Zn(2+)</name>
        <dbReference type="ChEBI" id="CHEBI:29105"/>
        <label>2</label>
        <note>catalytic</note>
    </ligand>
</feature>
<feature type="binding site" evidence="1">
    <location>
        <position position="145"/>
    </location>
    <ligand>
        <name>Zn(2+)</name>
        <dbReference type="ChEBI" id="CHEBI:29105"/>
        <label>1</label>
        <note>catalytic</note>
    </ligand>
</feature>
<feature type="binding site" evidence="1">
    <location>
        <position position="216"/>
    </location>
    <ligand>
        <name>Zn(2+)</name>
        <dbReference type="ChEBI" id="CHEBI:29105"/>
        <label>1</label>
        <note>catalytic</note>
    </ligand>
</feature>
<feature type="binding site" evidence="1">
    <location>
        <position position="216"/>
    </location>
    <ligand>
        <name>Zn(2+)</name>
        <dbReference type="ChEBI" id="CHEBI:29105"/>
        <label>2</label>
        <note>catalytic</note>
    </ligand>
</feature>
<feature type="binding site" evidence="1">
    <location>
        <position position="274"/>
    </location>
    <ligand>
        <name>Zn(2+)</name>
        <dbReference type="ChEBI" id="CHEBI:29105"/>
        <label>2</label>
        <note>catalytic</note>
    </ligand>
</feature>
<gene>
    <name evidence="1" type="primary">rnz</name>
    <name type="ordered locus">SSU98_1330</name>
</gene>
<reference key="1">
    <citation type="journal article" date="2007" name="PLoS ONE">
        <title>A glimpse of streptococcal toxic shock syndrome from comparative genomics of S. suis 2 Chinese isolates.</title>
        <authorList>
            <person name="Chen C."/>
            <person name="Tang J."/>
            <person name="Dong W."/>
            <person name="Wang C."/>
            <person name="Feng Y."/>
            <person name="Wang J."/>
            <person name="Zheng F."/>
            <person name="Pan X."/>
            <person name="Liu D."/>
            <person name="Li M."/>
            <person name="Song Y."/>
            <person name="Zhu X."/>
            <person name="Sun H."/>
            <person name="Feng T."/>
            <person name="Guo Z."/>
            <person name="Ju A."/>
            <person name="Ge J."/>
            <person name="Dong Y."/>
            <person name="Sun W."/>
            <person name="Jiang Y."/>
            <person name="Wang J."/>
            <person name="Yan J."/>
            <person name="Yang H."/>
            <person name="Wang X."/>
            <person name="Gao G.F."/>
            <person name="Yang R."/>
            <person name="Wang J."/>
            <person name="Yu J."/>
        </authorList>
    </citation>
    <scope>NUCLEOTIDE SEQUENCE [LARGE SCALE GENOMIC DNA]</scope>
    <source>
        <strain>98HAH33</strain>
    </source>
</reference>
<keyword id="KW-0255">Endonuclease</keyword>
<keyword id="KW-0378">Hydrolase</keyword>
<keyword id="KW-0479">Metal-binding</keyword>
<keyword id="KW-0540">Nuclease</keyword>
<keyword id="KW-0819">tRNA processing</keyword>
<keyword id="KW-0862">Zinc</keyword>
<organism>
    <name type="scientific">Streptococcus suis (strain 98HAH33)</name>
    <dbReference type="NCBI Taxonomy" id="391296"/>
    <lineage>
        <taxon>Bacteria</taxon>
        <taxon>Bacillati</taxon>
        <taxon>Bacillota</taxon>
        <taxon>Bacilli</taxon>
        <taxon>Lactobacillales</taxon>
        <taxon>Streptococcaceae</taxon>
        <taxon>Streptococcus</taxon>
    </lineage>
</organism>
<name>RNZ_STRS2</name>
<accession>A4W299</accession>
<dbReference type="EC" id="3.1.26.11" evidence="1"/>
<dbReference type="EMBL" id="CP000408">
    <property type="protein sequence ID" value="ABP92488.1"/>
    <property type="molecule type" value="Genomic_DNA"/>
</dbReference>
<dbReference type="SMR" id="A4W299"/>
<dbReference type="KEGG" id="ssv:SSU98_1330"/>
<dbReference type="HOGENOM" id="CLU_031317_2_0_9"/>
<dbReference type="GO" id="GO:0042781">
    <property type="term" value="F:3'-tRNA processing endoribonuclease activity"/>
    <property type="evidence" value="ECO:0007669"/>
    <property type="project" value="UniProtKB-UniRule"/>
</dbReference>
<dbReference type="GO" id="GO:0008270">
    <property type="term" value="F:zinc ion binding"/>
    <property type="evidence" value="ECO:0007669"/>
    <property type="project" value="UniProtKB-UniRule"/>
</dbReference>
<dbReference type="CDD" id="cd07717">
    <property type="entry name" value="RNaseZ_ZiPD-like_MBL-fold"/>
    <property type="match status" value="1"/>
</dbReference>
<dbReference type="FunFam" id="3.60.15.10:FF:000002">
    <property type="entry name" value="Ribonuclease Z"/>
    <property type="match status" value="1"/>
</dbReference>
<dbReference type="Gene3D" id="3.60.15.10">
    <property type="entry name" value="Ribonuclease Z/Hydroxyacylglutathione hydrolase-like"/>
    <property type="match status" value="1"/>
</dbReference>
<dbReference type="HAMAP" id="MF_01818">
    <property type="entry name" value="RNase_Z_BN"/>
    <property type="match status" value="1"/>
</dbReference>
<dbReference type="InterPro" id="IPR001279">
    <property type="entry name" value="Metallo-B-lactamas"/>
</dbReference>
<dbReference type="InterPro" id="IPR036866">
    <property type="entry name" value="RibonucZ/Hydroxyglut_hydro"/>
</dbReference>
<dbReference type="InterPro" id="IPR013471">
    <property type="entry name" value="RNase_Z/BN"/>
</dbReference>
<dbReference type="NCBIfam" id="NF000801">
    <property type="entry name" value="PRK00055.1-3"/>
    <property type="match status" value="1"/>
</dbReference>
<dbReference type="NCBIfam" id="TIGR02651">
    <property type="entry name" value="RNase_Z"/>
    <property type="match status" value="1"/>
</dbReference>
<dbReference type="PANTHER" id="PTHR46018">
    <property type="entry name" value="ZINC PHOSPHODIESTERASE ELAC PROTEIN 1"/>
    <property type="match status" value="1"/>
</dbReference>
<dbReference type="PANTHER" id="PTHR46018:SF2">
    <property type="entry name" value="ZINC PHOSPHODIESTERASE ELAC PROTEIN 1"/>
    <property type="match status" value="1"/>
</dbReference>
<dbReference type="Pfam" id="PF00753">
    <property type="entry name" value="Lactamase_B"/>
    <property type="match status" value="1"/>
</dbReference>
<dbReference type="SUPFAM" id="SSF56281">
    <property type="entry name" value="Metallo-hydrolase/oxidoreductase"/>
    <property type="match status" value="1"/>
</dbReference>
<sequence>MQIQFLGTGAGQPSKARNVSSLALKLLDEINQVWLFDCGEGTQNRILETTIRPRKVAKIFITHLHGDHIFGLPGFLSSRSFQSSEEQTDIDIYGPVGIRSFVLASLKVSGTRLPYRIHFHEFDVDTVGQVLETDKFTVFAEKLDHTIPCVGYRVIQKDLEGTLDAEALRAAGVPFGPLFGKIKNGQNVTLEDGTEIIASDYISPPRPGKVVTILGDTRKCHASVRLAVNADVLVHEATYGKGDEKIARKHGHSTNMEAAQVAKDAGVKQLLLNHISPRFLSKDISQLRKDASTIFEQVHIVKDLEEIEL</sequence>